<sequence length="171" mass="19308">MPLLDSFAVDHTRMQAPAVRVAKTMNTPHGDAITVFDLRFCIPNKEVMPEKGIHTLEHLFAGFMRDHLNGNGVEIIDISPMGCRTGFYMSLIGTPDEQRVADAWKAAMADVLKVQDQNQIPELNVYQCGTYQMHSLSEAQDIARHILERDVRVNSNKELALPKEKLQELHI</sequence>
<dbReference type="EC" id="4.4.1.21" evidence="1"/>
<dbReference type="EMBL" id="CP001138">
    <property type="protein sequence ID" value="ACH49598.1"/>
    <property type="molecule type" value="Genomic_DNA"/>
</dbReference>
<dbReference type="RefSeq" id="WP_001130194.1">
    <property type="nucleotide sequence ID" value="NC_011149.1"/>
</dbReference>
<dbReference type="SMR" id="B5F345"/>
<dbReference type="KEGG" id="sea:SeAg_B2935"/>
<dbReference type="HOGENOM" id="CLU_107531_2_0_6"/>
<dbReference type="Proteomes" id="UP000008819">
    <property type="component" value="Chromosome"/>
</dbReference>
<dbReference type="GO" id="GO:0005506">
    <property type="term" value="F:iron ion binding"/>
    <property type="evidence" value="ECO:0007669"/>
    <property type="project" value="InterPro"/>
</dbReference>
<dbReference type="GO" id="GO:0043768">
    <property type="term" value="F:S-ribosylhomocysteine lyase activity"/>
    <property type="evidence" value="ECO:0007669"/>
    <property type="project" value="UniProtKB-UniRule"/>
</dbReference>
<dbReference type="GO" id="GO:0009372">
    <property type="term" value="P:quorum sensing"/>
    <property type="evidence" value="ECO:0007669"/>
    <property type="project" value="UniProtKB-UniRule"/>
</dbReference>
<dbReference type="FunFam" id="3.30.1360.80:FF:000001">
    <property type="entry name" value="S-ribosylhomocysteine lyase"/>
    <property type="match status" value="1"/>
</dbReference>
<dbReference type="Gene3D" id="3.30.1360.80">
    <property type="entry name" value="S-ribosylhomocysteinase (LuxS)"/>
    <property type="match status" value="1"/>
</dbReference>
<dbReference type="HAMAP" id="MF_00091">
    <property type="entry name" value="LuxS"/>
    <property type="match status" value="1"/>
</dbReference>
<dbReference type="InterPro" id="IPR037005">
    <property type="entry name" value="LuxS_sf"/>
</dbReference>
<dbReference type="InterPro" id="IPR011249">
    <property type="entry name" value="Metalloenz_LuxS/M16"/>
</dbReference>
<dbReference type="InterPro" id="IPR003815">
    <property type="entry name" value="S-ribosylhomocysteinase"/>
</dbReference>
<dbReference type="NCBIfam" id="NF002602">
    <property type="entry name" value="PRK02260.1-2"/>
    <property type="match status" value="1"/>
</dbReference>
<dbReference type="PANTHER" id="PTHR35799">
    <property type="entry name" value="S-RIBOSYLHOMOCYSTEINE LYASE"/>
    <property type="match status" value="1"/>
</dbReference>
<dbReference type="PANTHER" id="PTHR35799:SF1">
    <property type="entry name" value="S-RIBOSYLHOMOCYSTEINE LYASE"/>
    <property type="match status" value="1"/>
</dbReference>
<dbReference type="Pfam" id="PF02664">
    <property type="entry name" value="LuxS"/>
    <property type="match status" value="1"/>
</dbReference>
<dbReference type="PIRSF" id="PIRSF006160">
    <property type="entry name" value="AI2"/>
    <property type="match status" value="1"/>
</dbReference>
<dbReference type="PRINTS" id="PR01487">
    <property type="entry name" value="LUXSPROTEIN"/>
</dbReference>
<dbReference type="SUPFAM" id="SSF63411">
    <property type="entry name" value="LuxS/MPP-like metallohydrolase"/>
    <property type="match status" value="1"/>
</dbReference>
<evidence type="ECO:0000255" key="1">
    <source>
        <dbReference type="HAMAP-Rule" id="MF_00091"/>
    </source>
</evidence>
<reference key="1">
    <citation type="journal article" date="2011" name="J. Bacteriol.">
        <title>Comparative genomics of 28 Salmonella enterica isolates: evidence for CRISPR-mediated adaptive sublineage evolution.</title>
        <authorList>
            <person name="Fricke W.F."/>
            <person name="Mammel M.K."/>
            <person name="McDermott P.F."/>
            <person name="Tartera C."/>
            <person name="White D.G."/>
            <person name="Leclerc J.E."/>
            <person name="Ravel J."/>
            <person name="Cebula T.A."/>
        </authorList>
    </citation>
    <scope>NUCLEOTIDE SEQUENCE [LARGE SCALE GENOMIC DNA]</scope>
    <source>
        <strain>SL483</strain>
    </source>
</reference>
<proteinExistence type="inferred from homology"/>
<keyword id="KW-0071">Autoinducer synthesis</keyword>
<keyword id="KW-0408">Iron</keyword>
<keyword id="KW-0456">Lyase</keyword>
<keyword id="KW-0479">Metal-binding</keyword>
<keyword id="KW-0673">Quorum sensing</keyword>
<name>LUXS_SALA4</name>
<feature type="chain" id="PRO_1000093320" description="S-ribosylhomocysteine lyase">
    <location>
        <begin position="1"/>
        <end position="171"/>
    </location>
</feature>
<feature type="binding site" evidence="1">
    <location>
        <position position="54"/>
    </location>
    <ligand>
        <name>Fe cation</name>
        <dbReference type="ChEBI" id="CHEBI:24875"/>
    </ligand>
</feature>
<feature type="binding site" evidence="1">
    <location>
        <position position="58"/>
    </location>
    <ligand>
        <name>Fe cation</name>
        <dbReference type="ChEBI" id="CHEBI:24875"/>
    </ligand>
</feature>
<feature type="binding site" evidence="1">
    <location>
        <position position="128"/>
    </location>
    <ligand>
        <name>Fe cation</name>
        <dbReference type="ChEBI" id="CHEBI:24875"/>
    </ligand>
</feature>
<comment type="function">
    <text evidence="1">Involved in the synthesis of autoinducer 2 (AI-2) which is secreted by bacteria and is used to communicate both the cell density and the metabolic potential of the environment. The regulation of gene expression in response to changes in cell density is called quorum sensing. Catalyzes the transformation of S-ribosylhomocysteine (RHC) to homocysteine (HC) and 4,5-dihydroxy-2,3-pentadione (DPD).</text>
</comment>
<comment type="catalytic activity">
    <reaction evidence="1">
        <text>S-(5-deoxy-D-ribos-5-yl)-L-homocysteine = (S)-4,5-dihydroxypentane-2,3-dione + L-homocysteine</text>
        <dbReference type="Rhea" id="RHEA:17753"/>
        <dbReference type="ChEBI" id="CHEBI:29484"/>
        <dbReference type="ChEBI" id="CHEBI:58195"/>
        <dbReference type="ChEBI" id="CHEBI:58199"/>
        <dbReference type="EC" id="4.4.1.21"/>
    </reaction>
</comment>
<comment type="cofactor">
    <cofactor evidence="1">
        <name>Fe cation</name>
        <dbReference type="ChEBI" id="CHEBI:24875"/>
    </cofactor>
    <text evidence="1">Binds 1 Fe cation per subunit.</text>
</comment>
<comment type="subunit">
    <text evidence="1">Homodimer.</text>
</comment>
<comment type="similarity">
    <text evidence="1">Belongs to the LuxS family.</text>
</comment>
<protein>
    <recommendedName>
        <fullName evidence="1">S-ribosylhomocysteine lyase</fullName>
        <ecNumber evidence="1">4.4.1.21</ecNumber>
    </recommendedName>
    <alternativeName>
        <fullName evidence="1">AI-2 synthesis protein</fullName>
    </alternativeName>
    <alternativeName>
        <fullName evidence="1">Autoinducer-2 production protein LuxS</fullName>
    </alternativeName>
</protein>
<gene>
    <name evidence="1" type="primary">luxS</name>
    <name type="ordered locus">SeAg_B2935</name>
</gene>
<organism>
    <name type="scientific">Salmonella agona (strain SL483)</name>
    <dbReference type="NCBI Taxonomy" id="454166"/>
    <lineage>
        <taxon>Bacteria</taxon>
        <taxon>Pseudomonadati</taxon>
        <taxon>Pseudomonadota</taxon>
        <taxon>Gammaproteobacteria</taxon>
        <taxon>Enterobacterales</taxon>
        <taxon>Enterobacteriaceae</taxon>
        <taxon>Salmonella</taxon>
    </lineage>
</organism>
<accession>B5F345</accession>